<sequence length="544" mass="62783">MAIGKRLLVNKPAEESFYASPMYDFLYPFRPVGNQWLPEYIIFVCAVILRCTIGLGPYSGKGSPPLYGDFEAQRHWMEITQHLPLSKWYWYDLQYWGLDYPPLTAFHSYLLGLIGSFFNPSWFALEKSRGFESPDNGLKTYMRSTVIISDILFYFPAVIYFTKWLGRYRNQSPIGQSIAASAILFQPSLMLIDHGHFQYNSVMLGLTAYAINNLLDEYYAMAAVCFVLSICFKQMALYYAPIFFAYLLSRSLLFPKFNIARLTVIAFATLATFAIIFAPLYFLGGGLKNIHQCIHRIFPFARGIFEDKVANFWCVTNVFVKYKERFTIQQLQLYSLIATVIGFLPAMIMTLLHPKKHLLPYVLIACSMSFFLFSFQVHEKTILIPLLPITLLYSSTDWNVLSLVSWINNVALFTLWPLLKKDGLHLQYAVSFLLSNWLIGNFSFITPRFLPKSLTPGPSISSINSDYRRRSLLPYNVVWKSFIIGTYIAMGFYHFLDQFVAPPSKYPDLWVLLNCAVGFICFSIFWLWSYYKIFTSGSKSMKDL</sequence>
<gene>
    <name type="primary">ALG6</name>
    <name type="ordered locus">YOR002W</name>
    <name type="ORF">UNA544</name>
</gene>
<comment type="function">
    <text evidence="2">Dolichyl pyrophosphate Man9GlcNAc2 alpha-1,3-glucosyltransferase that operates in the biosynthetic pathway of dolichol-linked oligosaccharides, the glycan precursors employed in protein asparagine (N)-glycosylation. The assembly of dolichol-linked oligosaccharides begins on the cytosolic side of the endoplasmic reticulum membrane and finishes in its lumen. The sequential addition of sugars to dolichol pyrophosphate produces dolichol-linked oligosaccharides containing fourteen sugars, including two GlcNAcs, nine mannoses and three glucoses. Once assembled, the oligosaccharide is transferred from the lipid to nascent proteins by oligosaccharyltransferases. In the lumen of the endoplasmic reticulum, adds the first glucose residue from dolichyl phosphate glucose (Dol-P-Glc) onto the lipid-linked oligosaccharide intermediate Man(9)GlcNAc(2)-PP-Dol to produce Glc(1)Man(9)GlcNAc(2)-PP-Dol.</text>
</comment>
<comment type="catalytic activity">
    <reaction evidence="2">
        <text>an alpha-D-Man-(1-&gt;2)-alpha-D-Man-(1-&gt;2)-alpha-D-Man-(1-&gt;3)-[alpha-D-Man-(1-&gt;2)-alpha-D-Man-(1-&gt;3)-[alpha-D-Man-(1-&gt;2)-alpha-D-Man-(1-&gt;6)]-alpha-D-Man-(1-&gt;6)]-beta-D-Man-(1-&gt;4)-beta-D-GlcNAc-(1-&gt;4)-alpha-D-GlcNAc-diphospho-di-trans,poly-cis-dolichol + a di-trans,poly-cis-dolichyl beta-D-glucosyl phosphate = an alpha-D-Glc-(1-&gt;3)-alpha-D-Man-(1-&gt;2)-alpha-D-Man-(1-&gt;2)-alpha-D-Man-(1-&gt;3)-[alpha-D-Man-(1-&gt;2)-alpha-D-Man-(1-&gt;3)-[alpha-D-Man-(1-&gt;2)-alpha-D-Man-(1-&gt;6)]-alpha-D-Man-(1-&gt;6)]-beta-D-Man-(1-&gt;4)-beta-D-GlcNAc-(1-&gt;4)-alpha-D-GlcNAc-diphospho-di-trans,poly-cis-dolichol + a di-trans,poly-cis-dolichyl phosphate + H(+)</text>
        <dbReference type="Rhea" id="RHEA:30635"/>
        <dbReference type="Rhea" id="RHEA-COMP:19498"/>
        <dbReference type="Rhea" id="RHEA-COMP:19502"/>
        <dbReference type="Rhea" id="RHEA-COMP:19520"/>
        <dbReference type="Rhea" id="RHEA-COMP:19521"/>
        <dbReference type="ChEBI" id="CHEBI:15378"/>
        <dbReference type="ChEBI" id="CHEBI:57525"/>
        <dbReference type="ChEBI" id="CHEBI:57683"/>
        <dbReference type="ChEBI" id="CHEBI:132520"/>
        <dbReference type="ChEBI" id="CHEBI:132521"/>
        <dbReference type="EC" id="2.4.1.267"/>
    </reaction>
    <physiologicalReaction direction="left-to-right" evidence="4">
        <dbReference type="Rhea" id="RHEA:30636"/>
    </physiologicalReaction>
</comment>
<comment type="pathway">
    <text evidence="2">Protein modification; protein glycosylation.</text>
</comment>
<comment type="subcellular location">
    <subcellularLocation>
        <location evidence="4">Endoplasmic reticulum membrane</location>
        <topology evidence="1">Multi-pass membrane protein</topology>
    </subcellularLocation>
</comment>
<comment type="similarity">
    <text evidence="3">Belongs to the ALG6/ALG8 glucosyltransferase family.</text>
</comment>
<feature type="chain" id="PRO_0000174161" description="Dolichyl pyrophosphate Man9GlcNAc2 alpha-1,3-glucosyltransferase">
    <location>
        <begin position="1"/>
        <end position="544"/>
    </location>
</feature>
<feature type="topological domain" description="Cytoplasmic" evidence="3">
    <location>
        <begin position="1"/>
        <end position="35"/>
    </location>
</feature>
<feature type="transmembrane region" description="Helical" evidence="1">
    <location>
        <begin position="36"/>
        <end position="56"/>
    </location>
</feature>
<feature type="topological domain" description="Lumenal" evidence="3">
    <location>
        <begin position="57"/>
        <end position="104"/>
    </location>
</feature>
<feature type="transmembrane region" description="Helical" evidence="1">
    <location>
        <begin position="105"/>
        <end position="125"/>
    </location>
</feature>
<feature type="topological domain" description="Cytoplasmic" evidence="3">
    <location>
        <begin position="126"/>
        <end position="145"/>
    </location>
</feature>
<feature type="transmembrane region" description="Helical" evidence="1">
    <location>
        <begin position="146"/>
        <end position="166"/>
    </location>
</feature>
<feature type="topological domain" description="Lumenal" evidence="3">
    <location>
        <begin position="167"/>
        <end position="223"/>
    </location>
</feature>
<feature type="transmembrane region" description="Helical" evidence="1">
    <location>
        <begin position="224"/>
        <end position="244"/>
    </location>
</feature>
<feature type="topological domain" description="Cytoplasmic" evidence="3">
    <location>
        <begin position="245"/>
        <end position="263"/>
    </location>
</feature>
<feature type="transmembrane region" description="Helical" evidence="1">
    <location>
        <begin position="264"/>
        <end position="284"/>
    </location>
</feature>
<feature type="topological domain" description="Lumenal" evidence="3">
    <location>
        <begin position="285"/>
        <end position="332"/>
    </location>
</feature>
<feature type="transmembrane region" description="Helical" evidence="1">
    <location>
        <begin position="333"/>
        <end position="353"/>
    </location>
</feature>
<feature type="topological domain" description="Cytoplasmic" evidence="3">
    <location>
        <begin position="354"/>
        <end position="356"/>
    </location>
</feature>
<feature type="transmembrane region" description="Helical" evidence="1">
    <location>
        <begin position="357"/>
        <end position="377"/>
    </location>
</feature>
<feature type="topological domain" description="Lumenal" evidence="3">
    <location>
        <begin position="378"/>
        <end position="398"/>
    </location>
</feature>
<feature type="transmembrane region" description="Helical" evidence="1">
    <location>
        <begin position="399"/>
        <end position="419"/>
    </location>
</feature>
<feature type="topological domain" description="Cytoplasmic" evidence="3">
    <location>
        <begin position="420"/>
        <end position="425"/>
    </location>
</feature>
<feature type="transmembrane region" description="Helical" evidence="1">
    <location>
        <begin position="426"/>
        <end position="446"/>
    </location>
</feature>
<feature type="topological domain" description="Lumenal" evidence="3">
    <location>
        <begin position="447"/>
        <end position="481"/>
    </location>
</feature>
<feature type="transmembrane region" description="Helical" evidence="1">
    <location>
        <begin position="482"/>
        <end position="502"/>
    </location>
</feature>
<feature type="topological domain" description="Cytoplasmic" evidence="3">
    <location>
        <begin position="503"/>
        <end position="508"/>
    </location>
</feature>
<feature type="transmembrane region" description="Helical" evidence="1">
    <location>
        <begin position="509"/>
        <end position="529"/>
    </location>
</feature>
<feature type="topological domain" description="Lumenal" evidence="3">
    <location>
        <begin position="530"/>
        <end position="544"/>
    </location>
</feature>
<feature type="sequence conflict" description="In Ref. 4; AAT92914." evidence="3" ref="4">
    <original>M</original>
    <variation>V</variation>
    <location>
        <position position="203"/>
    </location>
</feature>
<feature type="helix" evidence="5">
    <location>
        <begin position="42"/>
        <end position="52"/>
    </location>
</feature>
<feature type="helix" evidence="5">
    <location>
        <begin position="53"/>
        <end position="55"/>
    </location>
</feature>
<feature type="strand" evidence="5">
    <location>
        <begin position="64"/>
        <end position="66"/>
    </location>
</feature>
<feature type="helix" evidence="5">
    <location>
        <begin position="69"/>
        <end position="80"/>
    </location>
</feature>
<feature type="turn" evidence="5">
    <location>
        <begin position="88"/>
        <end position="90"/>
    </location>
</feature>
<feature type="turn" evidence="5">
    <location>
        <begin position="94"/>
        <end position="96"/>
    </location>
</feature>
<feature type="helix" evidence="5">
    <location>
        <begin position="102"/>
        <end position="118"/>
    </location>
</feature>
<feature type="turn" evidence="5">
    <location>
        <begin position="120"/>
        <end position="123"/>
    </location>
</feature>
<feature type="strand" evidence="5">
    <location>
        <begin position="125"/>
        <end position="128"/>
    </location>
</feature>
<feature type="strand" evidence="5">
    <location>
        <begin position="138"/>
        <end position="140"/>
    </location>
</feature>
<feature type="helix" evidence="5">
    <location>
        <begin position="141"/>
        <end position="153"/>
    </location>
</feature>
<feature type="helix" evidence="5">
    <location>
        <begin position="155"/>
        <end position="169"/>
    </location>
</feature>
<feature type="helix" evidence="5">
    <location>
        <begin position="173"/>
        <end position="184"/>
    </location>
</feature>
<feature type="helix" evidence="5">
    <location>
        <begin position="187"/>
        <end position="193"/>
    </location>
</feature>
<feature type="turn" evidence="5">
    <location>
        <begin position="194"/>
        <end position="196"/>
    </location>
</feature>
<feature type="helix" evidence="5">
    <location>
        <begin position="200"/>
        <end position="216"/>
    </location>
</feature>
<feature type="helix" evidence="5">
    <location>
        <begin position="219"/>
        <end position="230"/>
    </location>
</feature>
<feature type="helix" evidence="5">
    <location>
        <begin position="234"/>
        <end position="236"/>
    </location>
</feature>
<feature type="helix" evidence="5">
    <location>
        <begin position="240"/>
        <end position="252"/>
    </location>
</feature>
<feature type="helix" evidence="5">
    <location>
        <begin position="259"/>
        <end position="281"/>
    </location>
</feature>
<feature type="turn" evidence="5">
    <location>
        <begin position="282"/>
        <end position="284"/>
    </location>
</feature>
<feature type="helix" evidence="5">
    <location>
        <begin position="287"/>
        <end position="297"/>
    </location>
</feature>
<feature type="strand" evidence="5">
    <location>
        <begin position="303"/>
        <end position="305"/>
    </location>
</feature>
<feature type="strand" evidence="5">
    <location>
        <begin position="310"/>
        <end position="312"/>
    </location>
</feature>
<feature type="helix" evidence="5">
    <location>
        <begin position="313"/>
        <end position="316"/>
    </location>
</feature>
<feature type="turn" evidence="5">
    <location>
        <begin position="317"/>
        <end position="319"/>
    </location>
</feature>
<feature type="helix" evidence="5">
    <location>
        <begin position="322"/>
        <end position="324"/>
    </location>
</feature>
<feature type="helix" evidence="5">
    <location>
        <begin position="328"/>
        <end position="351"/>
    </location>
</feature>
<feature type="strand" evidence="5">
    <location>
        <begin position="356"/>
        <end position="358"/>
    </location>
</feature>
<feature type="helix" evidence="5">
    <location>
        <begin position="359"/>
        <end position="373"/>
    </location>
</feature>
<feature type="helix" evidence="5">
    <location>
        <begin position="383"/>
        <end position="391"/>
    </location>
</feature>
<feature type="helix" evidence="5">
    <location>
        <begin position="392"/>
        <end position="394"/>
    </location>
</feature>
<feature type="helix" evidence="5">
    <location>
        <begin position="399"/>
        <end position="413"/>
    </location>
</feature>
<feature type="helix" evidence="5">
    <location>
        <begin position="416"/>
        <end position="420"/>
    </location>
</feature>
<feature type="strand" evidence="5">
    <location>
        <begin position="421"/>
        <end position="423"/>
    </location>
</feature>
<feature type="helix" evidence="5">
    <location>
        <begin position="425"/>
        <end position="439"/>
    </location>
</feature>
<feature type="turn" evidence="5">
    <location>
        <begin position="440"/>
        <end position="442"/>
    </location>
</feature>
<feature type="helix" evidence="5">
    <location>
        <begin position="477"/>
        <end position="490"/>
    </location>
</feature>
<feature type="helix" evidence="5">
    <location>
        <begin position="493"/>
        <end position="496"/>
    </location>
</feature>
<feature type="turn" evidence="5">
    <location>
        <begin position="497"/>
        <end position="499"/>
    </location>
</feature>
<feature type="strand" evidence="5">
    <location>
        <begin position="504"/>
        <end position="509"/>
    </location>
</feature>
<feature type="helix" evidence="5">
    <location>
        <begin position="510"/>
        <end position="535"/>
    </location>
</feature>
<keyword id="KW-0002">3D-structure</keyword>
<keyword id="KW-0256">Endoplasmic reticulum</keyword>
<keyword id="KW-0328">Glycosyltransferase</keyword>
<keyword id="KW-0472">Membrane</keyword>
<keyword id="KW-1185">Reference proteome</keyword>
<keyword id="KW-0808">Transferase</keyword>
<keyword id="KW-0812">Transmembrane</keyword>
<keyword id="KW-1133">Transmembrane helix</keyword>
<name>ALG6_YEAST</name>
<evidence type="ECO:0000255" key="1"/>
<evidence type="ECO:0000269" key="2">
    <source>
    </source>
</evidence>
<evidence type="ECO:0000305" key="3"/>
<evidence type="ECO:0000305" key="4">
    <source>
    </source>
</evidence>
<evidence type="ECO:0007829" key="5">
    <source>
        <dbReference type="PDB" id="6SNI"/>
    </source>
</evidence>
<accession>Q12001</accession>
<accession>D6W268</accession>
<accession>E9P8Y7</accession>
<proteinExistence type="evidence at protein level"/>
<reference key="1">
    <citation type="journal article" date="1996" name="Yeast">
        <title>The sequence of a 30 kb fragment on the left arm of chromosome XV from Saccharomyces cerevisiae reveals 15 open reading frames, five of which correspond to previously identified genes.</title>
        <authorList>
            <person name="Sterky F."/>
            <person name="Holmberg A."/>
            <person name="Pettersson B."/>
            <person name="Uhlen M."/>
        </authorList>
    </citation>
    <scope>NUCLEOTIDE SEQUENCE [GENOMIC DNA]</scope>
</reference>
<reference key="2">
    <citation type="journal article" date="1997" name="Nature">
        <title>The nucleotide sequence of Saccharomyces cerevisiae chromosome XV.</title>
        <authorList>
            <person name="Dujon B."/>
            <person name="Albermann K."/>
            <person name="Aldea M."/>
            <person name="Alexandraki D."/>
            <person name="Ansorge W."/>
            <person name="Arino J."/>
            <person name="Benes V."/>
            <person name="Bohn C."/>
            <person name="Bolotin-Fukuhara M."/>
            <person name="Bordonne R."/>
            <person name="Boyer J."/>
            <person name="Camasses A."/>
            <person name="Casamayor A."/>
            <person name="Casas C."/>
            <person name="Cheret G."/>
            <person name="Cziepluch C."/>
            <person name="Daignan-Fornier B."/>
            <person name="Dang V.-D."/>
            <person name="de Haan M."/>
            <person name="Delius H."/>
            <person name="Durand P."/>
            <person name="Fairhead C."/>
            <person name="Feldmann H."/>
            <person name="Gaillon L."/>
            <person name="Galisson F."/>
            <person name="Gamo F.-J."/>
            <person name="Gancedo C."/>
            <person name="Goffeau A."/>
            <person name="Goulding S.E."/>
            <person name="Grivell L.A."/>
            <person name="Habbig B."/>
            <person name="Hand N.J."/>
            <person name="Hani J."/>
            <person name="Hattenhorst U."/>
            <person name="Hebling U."/>
            <person name="Hernando Y."/>
            <person name="Herrero E."/>
            <person name="Heumann K."/>
            <person name="Hiesel R."/>
            <person name="Hilger F."/>
            <person name="Hofmann B."/>
            <person name="Hollenberg C.P."/>
            <person name="Hughes B."/>
            <person name="Jauniaux J.-C."/>
            <person name="Kalogeropoulos A."/>
            <person name="Katsoulou C."/>
            <person name="Kordes E."/>
            <person name="Lafuente M.J."/>
            <person name="Landt O."/>
            <person name="Louis E.J."/>
            <person name="Maarse A.C."/>
            <person name="Madania A."/>
            <person name="Mannhaupt G."/>
            <person name="Marck C."/>
            <person name="Martin R.P."/>
            <person name="Mewes H.-W."/>
            <person name="Michaux G."/>
            <person name="Paces V."/>
            <person name="Parle-McDermott A.G."/>
            <person name="Pearson B.M."/>
            <person name="Perrin A."/>
            <person name="Pettersson B."/>
            <person name="Poch O."/>
            <person name="Pohl T.M."/>
            <person name="Poirey R."/>
            <person name="Portetelle D."/>
            <person name="Pujol A."/>
            <person name="Purnelle B."/>
            <person name="Ramezani Rad M."/>
            <person name="Rechmann S."/>
            <person name="Schwager C."/>
            <person name="Schweizer M."/>
            <person name="Sor F."/>
            <person name="Sterky F."/>
            <person name="Tarassov I.A."/>
            <person name="Teodoru C."/>
            <person name="Tettelin H."/>
            <person name="Thierry A."/>
            <person name="Tobiasch E."/>
            <person name="Tzermia M."/>
            <person name="Uhlen M."/>
            <person name="Unseld M."/>
            <person name="Valens M."/>
            <person name="Vandenbol M."/>
            <person name="Vetter I."/>
            <person name="Vlcek C."/>
            <person name="Voet M."/>
            <person name="Volckaert G."/>
            <person name="Voss H."/>
            <person name="Wambutt R."/>
            <person name="Wedler H."/>
            <person name="Wiemann S."/>
            <person name="Winsor B."/>
            <person name="Wolfe K.H."/>
            <person name="Zollner A."/>
            <person name="Zumstein E."/>
            <person name="Kleine K."/>
        </authorList>
    </citation>
    <scope>NUCLEOTIDE SEQUENCE [LARGE SCALE GENOMIC DNA]</scope>
    <source>
        <strain>ATCC 204508 / S288c</strain>
    </source>
</reference>
<reference key="3">
    <citation type="journal article" date="2014" name="G3 (Bethesda)">
        <title>The reference genome sequence of Saccharomyces cerevisiae: Then and now.</title>
        <authorList>
            <person name="Engel S.R."/>
            <person name="Dietrich F.S."/>
            <person name="Fisk D.G."/>
            <person name="Binkley G."/>
            <person name="Balakrishnan R."/>
            <person name="Costanzo M.C."/>
            <person name="Dwight S.S."/>
            <person name="Hitz B.C."/>
            <person name="Karra K."/>
            <person name="Nash R.S."/>
            <person name="Weng S."/>
            <person name="Wong E.D."/>
            <person name="Lloyd P."/>
            <person name="Skrzypek M.S."/>
            <person name="Miyasato S.R."/>
            <person name="Simison M."/>
            <person name="Cherry J.M."/>
        </authorList>
    </citation>
    <scope>GENOME REANNOTATION</scope>
    <source>
        <strain>ATCC 204508 / S288c</strain>
    </source>
</reference>
<reference key="4">
    <citation type="journal article" date="2007" name="Genome Res.">
        <title>Approaching a complete repository of sequence-verified protein-encoding clones for Saccharomyces cerevisiae.</title>
        <authorList>
            <person name="Hu Y."/>
            <person name="Rolfs A."/>
            <person name="Bhullar B."/>
            <person name="Murthy T.V.S."/>
            <person name="Zhu C."/>
            <person name="Berger M.F."/>
            <person name="Camargo A.A."/>
            <person name="Kelley F."/>
            <person name="McCarron S."/>
            <person name="Jepson D."/>
            <person name="Richardson A."/>
            <person name="Raphael J."/>
            <person name="Moreira D."/>
            <person name="Taycher E."/>
            <person name="Zuo D."/>
            <person name="Mohr S."/>
            <person name="Kane M.F."/>
            <person name="Williamson J."/>
            <person name="Simpson A.J.G."/>
            <person name="Bulyk M.L."/>
            <person name="Harlow E."/>
            <person name="Marsischky G."/>
            <person name="Kolodner R.D."/>
            <person name="LaBaer J."/>
        </authorList>
    </citation>
    <scope>NUCLEOTIDE SEQUENCE [GENOMIC DNA]</scope>
    <source>
        <strain>ATCC 204508 / S288c</strain>
    </source>
</reference>
<reference key="5">
    <citation type="journal article" date="1996" name="Glycobiology">
        <title>Isolation of the ALG6 locus of Saccharomyces cerevisiae required for glucosylation in the N-linked glycosylation pathway.</title>
        <authorList>
            <person name="Reiss G."/>
            <person name="te Heesen S."/>
            <person name="Zimmerman J."/>
            <person name="Robbins P.W."/>
            <person name="Aebi M."/>
        </authorList>
    </citation>
    <scope>FUNCTION</scope>
    <scope>CATALYTIC ACTIVITY</scope>
    <scope>PATHWAY</scope>
    <scope>SUBCELLULAR LOCATION</scope>
</reference>
<reference key="6">
    <citation type="journal article" date="2006" name="Proc. Natl. Acad. Sci. U.S.A.">
        <title>A global topology map of the Saccharomyces cerevisiae membrane proteome.</title>
        <authorList>
            <person name="Kim H."/>
            <person name="Melen K."/>
            <person name="Oesterberg M."/>
            <person name="von Heijne G."/>
        </authorList>
    </citation>
    <scope>TOPOLOGY [LARGE SCALE ANALYSIS]</scope>
    <source>
        <strain>ATCC 208353 / W303-1A</strain>
    </source>
</reference>
<dbReference type="EC" id="2.4.1.267" evidence="2"/>
<dbReference type="EMBL" id="U43491">
    <property type="protein sequence ID" value="AAC49481.1"/>
    <property type="molecule type" value="Genomic_DNA"/>
</dbReference>
<dbReference type="EMBL" id="Z74910">
    <property type="protein sequence ID" value="CAA99190.1"/>
    <property type="molecule type" value="Genomic_DNA"/>
</dbReference>
<dbReference type="EMBL" id="AY692895">
    <property type="protein sequence ID" value="AAT92914.1"/>
    <property type="molecule type" value="Genomic_DNA"/>
</dbReference>
<dbReference type="EMBL" id="BK006948">
    <property type="protein sequence ID" value="DAA10784.1"/>
    <property type="molecule type" value="Genomic_DNA"/>
</dbReference>
<dbReference type="PIR" id="S61985">
    <property type="entry name" value="S61985"/>
</dbReference>
<dbReference type="RefSeq" id="NP_014644.1">
    <property type="nucleotide sequence ID" value="NM_001183421.1"/>
</dbReference>
<dbReference type="PDB" id="6SNH">
    <property type="method" value="EM"/>
    <property type="resolution" value="3.90 A"/>
    <property type="chains" value="X=1-544"/>
</dbReference>
<dbReference type="PDB" id="6SNI">
    <property type="method" value="EM"/>
    <property type="resolution" value="3.00 A"/>
    <property type="chains" value="X=1-544"/>
</dbReference>
<dbReference type="PDBsum" id="6SNH"/>
<dbReference type="PDBsum" id="6SNI"/>
<dbReference type="EMDB" id="EMD-10257"/>
<dbReference type="EMDB" id="EMD-10258"/>
<dbReference type="SMR" id="Q12001"/>
<dbReference type="BioGRID" id="34405">
    <property type="interactions" value="342"/>
</dbReference>
<dbReference type="FunCoup" id="Q12001">
    <property type="interactions" value="1127"/>
</dbReference>
<dbReference type="STRING" id="4932.YOR002W"/>
<dbReference type="CAZy" id="GT57">
    <property type="family name" value="Glycosyltransferase Family 57"/>
</dbReference>
<dbReference type="iPTMnet" id="Q12001"/>
<dbReference type="PaxDb" id="4932-YOR002W"/>
<dbReference type="PeptideAtlas" id="Q12001"/>
<dbReference type="ABCD" id="Q12001">
    <property type="antibodies" value="1 sequenced antibody"/>
</dbReference>
<dbReference type="EnsemblFungi" id="YOR002W_mRNA">
    <property type="protein sequence ID" value="YOR002W"/>
    <property type="gene ID" value="YOR002W"/>
</dbReference>
<dbReference type="GeneID" id="854163"/>
<dbReference type="KEGG" id="sce:YOR002W"/>
<dbReference type="AGR" id="SGD:S000005528"/>
<dbReference type="SGD" id="S000005528">
    <property type="gene designation" value="ALG6"/>
</dbReference>
<dbReference type="VEuPathDB" id="FungiDB:YOR002W"/>
<dbReference type="eggNOG" id="KOG2575">
    <property type="taxonomic scope" value="Eukaryota"/>
</dbReference>
<dbReference type="GeneTree" id="ENSGT00940000153733"/>
<dbReference type="HOGENOM" id="CLU_008110_2_1_1"/>
<dbReference type="InParanoid" id="Q12001"/>
<dbReference type="OMA" id="FQVPPMH"/>
<dbReference type="OrthoDB" id="5589195at2759"/>
<dbReference type="BioCyc" id="MetaCyc:YOR002W-MONOMER"/>
<dbReference type="BioCyc" id="YEAST:YOR002W-MONOMER"/>
<dbReference type="BRENDA" id="2.4.1.267">
    <property type="organism ID" value="984"/>
</dbReference>
<dbReference type="Reactome" id="R-SCE-446193">
    <property type="pathway name" value="Biosynthesis of the N-glycan precursor (dolichol lipid-linked oligosaccharide, LLO) and transfer to a nascent protein"/>
</dbReference>
<dbReference type="UniPathway" id="UPA00378"/>
<dbReference type="BioGRID-ORCS" id="854163">
    <property type="hits" value="8 hits in 10 CRISPR screens"/>
</dbReference>
<dbReference type="PRO" id="PR:Q12001"/>
<dbReference type="Proteomes" id="UP000002311">
    <property type="component" value="Chromosome XV"/>
</dbReference>
<dbReference type="RNAct" id="Q12001">
    <property type="molecule type" value="protein"/>
</dbReference>
<dbReference type="GO" id="GO:0005783">
    <property type="term" value="C:endoplasmic reticulum"/>
    <property type="evidence" value="ECO:0000315"/>
    <property type="project" value="SGD"/>
</dbReference>
<dbReference type="GO" id="GO:0005789">
    <property type="term" value="C:endoplasmic reticulum membrane"/>
    <property type="evidence" value="ECO:0000318"/>
    <property type="project" value="GO_Central"/>
</dbReference>
<dbReference type="GO" id="GO:0042281">
    <property type="term" value="F:dolichyl pyrophosphate Man9GlcNAc2 alpha-1,3-glucosyltransferase activity"/>
    <property type="evidence" value="ECO:0000315"/>
    <property type="project" value="SGD"/>
</dbReference>
<dbReference type="GO" id="GO:0016758">
    <property type="term" value="F:hexosyltransferase activity"/>
    <property type="evidence" value="ECO:0000315"/>
    <property type="project" value="SGD"/>
</dbReference>
<dbReference type="GO" id="GO:0009060">
    <property type="term" value="P:aerobic respiration"/>
    <property type="evidence" value="ECO:0000315"/>
    <property type="project" value="SGD"/>
</dbReference>
<dbReference type="GO" id="GO:0006488">
    <property type="term" value="P:dolichol-linked oligosaccharide biosynthetic process"/>
    <property type="evidence" value="ECO:0000315"/>
    <property type="project" value="SGD"/>
</dbReference>
<dbReference type="GO" id="GO:0006486">
    <property type="term" value="P:protein glycosylation"/>
    <property type="evidence" value="ECO:0000315"/>
    <property type="project" value="SGD"/>
</dbReference>
<dbReference type="InterPro" id="IPR004856">
    <property type="entry name" value="Glyco_trans_ALG6/ALG8"/>
</dbReference>
<dbReference type="PANTHER" id="PTHR12413">
    <property type="entry name" value="DOLICHYL GLYCOSYLTRANSFERASE"/>
    <property type="match status" value="1"/>
</dbReference>
<dbReference type="PANTHER" id="PTHR12413:SF1">
    <property type="entry name" value="DOLICHYL PYROPHOSPHATE MAN9GLCNAC2 ALPHA-1,3-GLUCOSYLTRANSFERASE"/>
    <property type="match status" value="1"/>
</dbReference>
<dbReference type="Pfam" id="PF03155">
    <property type="entry name" value="Alg6_Alg8"/>
    <property type="match status" value="1"/>
</dbReference>
<protein>
    <recommendedName>
        <fullName>Dolichyl pyrophosphate Man9GlcNAc2 alpha-1,3-glucosyltransferase</fullName>
        <ecNumber evidence="2">2.4.1.267</ecNumber>
    </recommendedName>
    <alternativeName>
        <fullName>Asparagine-linked glycosylation protein 6</fullName>
    </alternativeName>
    <alternativeName>
        <fullName>Dol-P-Glc:Man(9)GlcNAc(2)-PP-Dol alpha-1,3-glucosyltransferase</fullName>
    </alternativeName>
    <alternativeName>
        <fullName>Dolichyl-P-Glc:Man9GlcNAc2-PP-dolichyl glucosyltransferase</fullName>
    </alternativeName>
</protein>
<organism>
    <name type="scientific">Saccharomyces cerevisiae (strain ATCC 204508 / S288c)</name>
    <name type="common">Baker's yeast</name>
    <dbReference type="NCBI Taxonomy" id="559292"/>
    <lineage>
        <taxon>Eukaryota</taxon>
        <taxon>Fungi</taxon>
        <taxon>Dikarya</taxon>
        <taxon>Ascomycota</taxon>
        <taxon>Saccharomycotina</taxon>
        <taxon>Saccharomycetes</taxon>
        <taxon>Saccharomycetales</taxon>
        <taxon>Saccharomycetaceae</taxon>
        <taxon>Saccharomyces</taxon>
    </lineage>
</organism>